<protein>
    <recommendedName>
        <fullName>Sorting nexin-17</fullName>
    </recommendedName>
</protein>
<evidence type="ECO:0000250" key="1"/>
<evidence type="ECO:0000250" key="2">
    <source>
        <dbReference type="UniProtKB" id="Q15036"/>
    </source>
</evidence>
<evidence type="ECO:0000250" key="3">
    <source>
        <dbReference type="UniProtKB" id="Q8BVL3"/>
    </source>
</evidence>
<evidence type="ECO:0000255" key="4">
    <source>
        <dbReference type="PROSITE-ProRule" id="PRU00147"/>
    </source>
</evidence>
<evidence type="ECO:0000255" key="5">
    <source>
        <dbReference type="PROSITE-ProRule" id="PRU00166"/>
    </source>
</evidence>
<evidence type="ECO:0000256" key="6">
    <source>
        <dbReference type="SAM" id="MobiDB-lite"/>
    </source>
</evidence>
<evidence type="ECO:0000305" key="7"/>
<reference key="1">
    <citation type="journal article" date="2013" name="Nature">
        <title>The zebrafish reference genome sequence and its relationship to the human genome.</title>
        <authorList>
            <person name="Howe K."/>
            <person name="Clark M.D."/>
            <person name="Torroja C.F."/>
            <person name="Torrance J."/>
            <person name="Berthelot C."/>
            <person name="Muffato M."/>
            <person name="Collins J.E."/>
            <person name="Humphray S."/>
            <person name="McLaren K."/>
            <person name="Matthews L."/>
            <person name="McLaren S."/>
            <person name="Sealy I."/>
            <person name="Caccamo M."/>
            <person name="Churcher C."/>
            <person name="Scott C."/>
            <person name="Barrett J.C."/>
            <person name="Koch R."/>
            <person name="Rauch G.J."/>
            <person name="White S."/>
            <person name="Chow W."/>
            <person name="Kilian B."/>
            <person name="Quintais L.T."/>
            <person name="Guerra-Assuncao J.A."/>
            <person name="Zhou Y."/>
            <person name="Gu Y."/>
            <person name="Yen J."/>
            <person name="Vogel J.H."/>
            <person name="Eyre T."/>
            <person name="Redmond S."/>
            <person name="Banerjee R."/>
            <person name="Chi J."/>
            <person name="Fu B."/>
            <person name="Langley E."/>
            <person name="Maguire S.F."/>
            <person name="Laird G.K."/>
            <person name="Lloyd D."/>
            <person name="Kenyon E."/>
            <person name="Donaldson S."/>
            <person name="Sehra H."/>
            <person name="Almeida-King J."/>
            <person name="Loveland J."/>
            <person name="Trevanion S."/>
            <person name="Jones M."/>
            <person name="Quail M."/>
            <person name="Willey D."/>
            <person name="Hunt A."/>
            <person name="Burton J."/>
            <person name="Sims S."/>
            <person name="McLay K."/>
            <person name="Plumb B."/>
            <person name="Davis J."/>
            <person name="Clee C."/>
            <person name="Oliver K."/>
            <person name="Clark R."/>
            <person name="Riddle C."/>
            <person name="Elliot D."/>
            <person name="Threadgold G."/>
            <person name="Harden G."/>
            <person name="Ware D."/>
            <person name="Begum S."/>
            <person name="Mortimore B."/>
            <person name="Kerry G."/>
            <person name="Heath P."/>
            <person name="Phillimore B."/>
            <person name="Tracey A."/>
            <person name="Corby N."/>
            <person name="Dunn M."/>
            <person name="Johnson C."/>
            <person name="Wood J."/>
            <person name="Clark S."/>
            <person name="Pelan S."/>
            <person name="Griffiths G."/>
            <person name="Smith M."/>
            <person name="Glithero R."/>
            <person name="Howden P."/>
            <person name="Barker N."/>
            <person name="Lloyd C."/>
            <person name="Stevens C."/>
            <person name="Harley J."/>
            <person name="Holt K."/>
            <person name="Panagiotidis G."/>
            <person name="Lovell J."/>
            <person name="Beasley H."/>
            <person name="Henderson C."/>
            <person name="Gordon D."/>
            <person name="Auger K."/>
            <person name="Wright D."/>
            <person name="Collins J."/>
            <person name="Raisen C."/>
            <person name="Dyer L."/>
            <person name="Leung K."/>
            <person name="Robertson L."/>
            <person name="Ambridge K."/>
            <person name="Leongamornlert D."/>
            <person name="McGuire S."/>
            <person name="Gilderthorp R."/>
            <person name="Griffiths C."/>
            <person name="Manthravadi D."/>
            <person name="Nichol S."/>
            <person name="Barker G."/>
            <person name="Whitehead S."/>
            <person name="Kay M."/>
            <person name="Brown J."/>
            <person name="Murnane C."/>
            <person name="Gray E."/>
            <person name="Humphries M."/>
            <person name="Sycamore N."/>
            <person name="Barker D."/>
            <person name="Saunders D."/>
            <person name="Wallis J."/>
            <person name="Babbage A."/>
            <person name="Hammond S."/>
            <person name="Mashreghi-Mohammadi M."/>
            <person name="Barr L."/>
            <person name="Martin S."/>
            <person name="Wray P."/>
            <person name="Ellington A."/>
            <person name="Matthews N."/>
            <person name="Ellwood M."/>
            <person name="Woodmansey R."/>
            <person name="Clark G."/>
            <person name="Cooper J."/>
            <person name="Tromans A."/>
            <person name="Grafham D."/>
            <person name="Skuce C."/>
            <person name="Pandian R."/>
            <person name="Andrews R."/>
            <person name="Harrison E."/>
            <person name="Kimberley A."/>
            <person name="Garnett J."/>
            <person name="Fosker N."/>
            <person name="Hall R."/>
            <person name="Garner P."/>
            <person name="Kelly D."/>
            <person name="Bird C."/>
            <person name="Palmer S."/>
            <person name="Gehring I."/>
            <person name="Berger A."/>
            <person name="Dooley C.M."/>
            <person name="Ersan-Urun Z."/>
            <person name="Eser C."/>
            <person name="Geiger H."/>
            <person name="Geisler M."/>
            <person name="Karotki L."/>
            <person name="Kirn A."/>
            <person name="Konantz J."/>
            <person name="Konantz M."/>
            <person name="Oberlander M."/>
            <person name="Rudolph-Geiger S."/>
            <person name="Teucke M."/>
            <person name="Lanz C."/>
            <person name="Raddatz G."/>
            <person name="Osoegawa K."/>
            <person name="Zhu B."/>
            <person name="Rapp A."/>
            <person name="Widaa S."/>
            <person name="Langford C."/>
            <person name="Yang F."/>
            <person name="Schuster S.C."/>
            <person name="Carter N.P."/>
            <person name="Harrow J."/>
            <person name="Ning Z."/>
            <person name="Herrero J."/>
            <person name="Searle S.M."/>
            <person name="Enright A."/>
            <person name="Geisler R."/>
            <person name="Plasterk R.H."/>
            <person name="Lee C."/>
            <person name="Westerfield M."/>
            <person name="de Jong P.J."/>
            <person name="Zon L.I."/>
            <person name="Postlethwait J.H."/>
            <person name="Nusslein-Volhard C."/>
            <person name="Hubbard T.J."/>
            <person name="Roest Crollius H."/>
            <person name="Rogers J."/>
            <person name="Stemple D.L."/>
        </authorList>
    </citation>
    <scope>NUCLEOTIDE SEQUENCE [LARGE SCALE GENOMIC DNA]</scope>
    <source>
        <strain>Tuebingen</strain>
    </source>
</reference>
<reference key="2">
    <citation type="submission" date="2008-04" db="EMBL/GenBank/DDBJ databases">
        <authorList>
            <consortium name="NIH - Zebrafish Gene Collection (ZGC) project"/>
        </authorList>
    </citation>
    <scope>NUCLEOTIDE SEQUENCE [LARGE SCALE MRNA]</scope>
</reference>
<organism>
    <name type="scientific">Danio rerio</name>
    <name type="common">Zebrafish</name>
    <name type="synonym">Brachydanio rerio</name>
    <dbReference type="NCBI Taxonomy" id="7955"/>
    <lineage>
        <taxon>Eukaryota</taxon>
        <taxon>Metazoa</taxon>
        <taxon>Chordata</taxon>
        <taxon>Craniata</taxon>
        <taxon>Vertebrata</taxon>
        <taxon>Euteleostomi</taxon>
        <taxon>Actinopterygii</taxon>
        <taxon>Neopterygii</taxon>
        <taxon>Teleostei</taxon>
        <taxon>Ostariophysi</taxon>
        <taxon>Cypriniformes</taxon>
        <taxon>Danionidae</taxon>
        <taxon>Danioninae</taxon>
        <taxon>Danio</taxon>
    </lineage>
</organism>
<gene>
    <name type="primary">snx17</name>
    <name type="ORF">si:ch211-101l18.2</name>
</gene>
<feature type="chain" id="PRO_0000238953" description="Sorting nexin-17">
    <location>
        <begin position="1"/>
        <end position="473"/>
    </location>
</feature>
<feature type="domain" description="PX" evidence="4">
    <location>
        <begin position="1"/>
        <end position="108"/>
    </location>
</feature>
<feature type="domain" description="Ras-associating" evidence="5">
    <location>
        <begin position="114"/>
        <end position="205"/>
    </location>
</feature>
<feature type="region of interest" description="FERM-like" evidence="1">
    <location>
        <begin position="114"/>
        <end position="433"/>
    </location>
</feature>
<feature type="region of interest" description="PTB-like F3 module" evidence="1">
    <location>
        <begin position="269"/>
        <end position="433"/>
    </location>
</feature>
<feature type="region of interest" description="Disordered" evidence="6">
    <location>
        <begin position="391"/>
        <end position="431"/>
    </location>
</feature>
<feature type="compositionally biased region" description="Polar residues" evidence="6">
    <location>
        <begin position="403"/>
        <end position="414"/>
    </location>
</feature>
<feature type="binding site" evidence="1">
    <location>
        <position position="35"/>
    </location>
    <ligand>
        <name>a 1,2-diacyl-sn-glycero-3-phospho-(1D-myo-inositol-3-phosphate)</name>
        <dbReference type="ChEBI" id="CHEBI:58088"/>
    </ligand>
</feature>
<feature type="binding site" evidence="1">
    <location>
        <position position="37"/>
    </location>
    <ligand>
        <name>a 1,2-diacyl-sn-glycero-3-phospho-(1D-myo-inositol-3-phosphate)</name>
        <dbReference type="ChEBI" id="CHEBI:58088"/>
    </ligand>
</feature>
<feature type="binding site" evidence="1">
    <location>
        <position position="61"/>
    </location>
    <ligand>
        <name>a 1,2-diacyl-sn-glycero-3-phospho-(1D-myo-inositol-3-phosphate)</name>
        <dbReference type="ChEBI" id="CHEBI:58088"/>
    </ligand>
</feature>
<feature type="binding site" evidence="1">
    <location>
        <position position="74"/>
    </location>
    <ligand>
        <name>a 1,2-diacyl-sn-glycero-3-phospho-(1D-myo-inositol-3-phosphate)</name>
        <dbReference type="ChEBI" id="CHEBI:58088"/>
    </ligand>
</feature>
<feature type="sequence conflict" description="In Ref. 2; AAI62993." evidence="7" ref="2">
    <location>
        <position position="395"/>
    </location>
</feature>
<comment type="function">
    <text evidence="2 3">Critical regulator of endosomal recycling of numerous surface proteins, including integrins, signaling receptor and channels. Binds to NPxY sequences in the cytoplasmic tails of target cargos. Associates with retriever and CCC complexes to prevent lysosomal degradation and promote cell surface recycling of numerous cargos such as integrins ITGB1, ITGB5 and their associated alpha subunits. Also required for maintenance of normal cell surface levels of APP and LRP1. Interacts with membranes containing phosphatidylinositol 3-phosphate (PtdIns(3P)).</text>
</comment>
<comment type="subunit">
    <text evidence="2">Monomer (By similarity). Interacts with CCDC22, CCDC93, DSCR3 and VPS35L; the interaction with DSCR3 is direct and associates SNX17 with the retriever and CCC complexes (By similarity).</text>
</comment>
<comment type="subcellular location">
    <subcellularLocation>
        <location evidence="2">Cytoplasm</location>
    </subcellularLocation>
    <subcellularLocation>
        <location evidence="2">Early endosome</location>
    </subcellularLocation>
    <subcellularLocation>
        <location evidence="2">Cytoplasmic vesicle membrane</location>
        <topology evidence="2">Peripheral membrane protein</topology>
        <orientation evidence="2">Cytoplasmic side</orientation>
    </subcellularLocation>
</comment>
<comment type="domain">
    <text evidence="2">The PX domain mediates specific binding to phosphatidylinositol 3-phosphate (PtdIns(P3)). Required for association with endosomes.</text>
</comment>
<comment type="domain">
    <text evidence="2">The PTB-like F3 module within the FERM-like domain mediates cargo recognition via their NPxY sequences, while the F1 module (Ras-associating) is responsible for interaction with membrane-bound HRAS.</text>
</comment>
<comment type="similarity">
    <text evidence="7">Belongs to the sorting nexin family.</text>
</comment>
<sequence>MHFSIPETEVRSDENGSSYVAYNIHVNGVLHCRVRYSQLLGLHEQIKKEYGNNVVPAFPPKKIFTLTPAEVDQRREQLEKYMQAVRQDPILGSSEMFNSFLRKAQQETQQIPTEEVQLEIYLSNGQKVKVNILTSDQTEDVLEAVASKLDLPDELVGYFSLFLVQERADGSCTYVRKLQEFELPYVSITSLHSSDYRIILRKSYWDTAYDSDVMDDRVGLNLLYAQTVSDIDRGWILVNKEQHRQLKSLQEKGSKKEFIRLAQTLKYYGYIKFDPCITDFPEKGCHVIVGAGNNELNFHVKLPNEQMKEGSFKVTRMRCWRVTSSQVPVANGTANPSSSSKCDVKLELAFEYLMSKDRLQWVTITSQQAIMMSICLQSMVDELMVKKSGGSIKKQMQKKRLNGSLQRSDSQQAVKSPPILDSPDPNREQVVKLSTKLSSVSLRGLSSSNSAGDISGNDFHGNYAFEGIGDDDL</sequence>
<name>SNX17_DANRE</name>
<keyword id="KW-0963">Cytoplasm</keyword>
<keyword id="KW-0968">Cytoplasmic vesicle</keyword>
<keyword id="KW-0967">Endosome</keyword>
<keyword id="KW-0446">Lipid-binding</keyword>
<keyword id="KW-0472">Membrane</keyword>
<keyword id="KW-0653">Protein transport</keyword>
<keyword id="KW-1185">Reference proteome</keyword>
<keyword id="KW-0813">Transport</keyword>
<accession>Q5RID7</accession>
<accession>B3DI45</accession>
<dbReference type="EMBL" id="BX276101">
    <property type="status" value="NOT_ANNOTATED_CDS"/>
    <property type="molecule type" value="Genomic_DNA"/>
</dbReference>
<dbReference type="EMBL" id="BC162993">
    <property type="protein sequence ID" value="AAI62993.1"/>
    <property type="molecule type" value="mRNA"/>
</dbReference>
<dbReference type="RefSeq" id="NP_001038622.2">
    <property type="nucleotide sequence ID" value="NM_001045157.3"/>
</dbReference>
<dbReference type="RefSeq" id="XP_009292899.1">
    <property type="nucleotide sequence ID" value="XM_009294624.3"/>
</dbReference>
<dbReference type="SMR" id="Q5RID7"/>
<dbReference type="FunCoup" id="Q5RID7">
    <property type="interactions" value="1845"/>
</dbReference>
<dbReference type="STRING" id="7955.ENSDARP00000040190"/>
<dbReference type="PaxDb" id="7955-ENSDARP00000040190"/>
<dbReference type="Ensembl" id="ENSDART00000040191">
    <property type="protein sequence ID" value="ENSDARP00000040190"/>
    <property type="gene ID" value="ENSDARG00000091418"/>
</dbReference>
<dbReference type="GeneID" id="568263"/>
<dbReference type="KEGG" id="dre:568263"/>
<dbReference type="AGR" id="ZFIN:ZDB-GENE-030131-9475"/>
<dbReference type="CTD" id="9784"/>
<dbReference type="ZFIN" id="ZDB-GENE-030131-9475">
    <property type="gene designation" value="snx17"/>
</dbReference>
<dbReference type="eggNOG" id="KOG3784">
    <property type="taxonomic scope" value="Eukaryota"/>
</dbReference>
<dbReference type="InParanoid" id="Q5RID7"/>
<dbReference type="OMA" id="RRHCVGV"/>
<dbReference type="OrthoDB" id="5772781at2759"/>
<dbReference type="PhylomeDB" id="Q5RID7"/>
<dbReference type="TreeFam" id="TF318398"/>
<dbReference type="PRO" id="PR:Q5RID7"/>
<dbReference type="Proteomes" id="UP000000437">
    <property type="component" value="Chromosome 20"/>
</dbReference>
<dbReference type="Bgee" id="ENSDARG00000091418">
    <property type="expression patterns" value="Expressed in cleaving embryo and 26 other cell types or tissues"/>
</dbReference>
<dbReference type="ExpressionAtlas" id="Q5RID7">
    <property type="expression patterns" value="baseline and differential"/>
</dbReference>
<dbReference type="GO" id="GO:0031410">
    <property type="term" value="C:cytoplasmic vesicle"/>
    <property type="evidence" value="ECO:0000250"/>
    <property type="project" value="UniProtKB"/>
</dbReference>
<dbReference type="GO" id="GO:0030659">
    <property type="term" value="C:cytoplasmic vesicle membrane"/>
    <property type="evidence" value="ECO:0007669"/>
    <property type="project" value="UniProtKB-SubCell"/>
</dbReference>
<dbReference type="GO" id="GO:0005829">
    <property type="term" value="C:cytosol"/>
    <property type="evidence" value="ECO:0000250"/>
    <property type="project" value="UniProtKB"/>
</dbReference>
<dbReference type="GO" id="GO:0005769">
    <property type="term" value="C:early endosome"/>
    <property type="evidence" value="ECO:0000318"/>
    <property type="project" value="GO_Central"/>
</dbReference>
<dbReference type="GO" id="GO:0035091">
    <property type="term" value="F:phosphatidylinositol binding"/>
    <property type="evidence" value="ECO:0000250"/>
    <property type="project" value="UniProtKB"/>
</dbReference>
<dbReference type="GO" id="GO:0032456">
    <property type="term" value="P:endocytic recycling"/>
    <property type="evidence" value="ECO:0000318"/>
    <property type="project" value="GO_Central"/>
</dbReference>
<dbReference type="GO" id="GO:0006886">
    <property type="term" value="P:intracellular protein transport"/>
    <property type="evidence" value="ECO:0000318"/>
    <property type="project" value="GO_Central"/>
</dbReference>
<dbReference type="GO" id="GO:0007165">
    <property type="term" value="P:signal transduction"/>
    <property type="evidence" value="ECO:0007669"/>
    <property type="project" value="InterPro"/>
</dbReference>
<dbReference type="CDD" id="cd13337">
    <property type="entry name" value="FERM-like_C_SNX17"/>
    <property type="match status" value="1"/>
</dbReference>
<dbReference type="CDD" id="cd16121">
    <property type="entry name" value="FERM_F1_SNX17"/>
    <property type="match status" value="1"/>
</dbReference>
<dbReference type="CDD" id="cd06885">
    <property type="entry name" value="PX_SNX17_31"/>
    <property type="match status" value="1"/>
</dbReference>
<dbReference type="FunFam" id="1.20.80.60:FF:000001">
    <property type="entry name" value="Sorting nexin-17 isoform1"/>
    <property type="match status" value="1"/>
</dbReference>
<dbReference type="FunFam" id="2.30.29.30:FF:000145">
    <property type="entry name" value="Sorting nexin-17 isoform1"/>
    <property type="match status" value="1"/>
</dbReference>
<dbReference type="FunFam" id="3.10.20.90:FF:000094">
    <property type="entry name" value="Sorting nexin-17 isoform1"/>
    <property type="match status" value="1"/>
</dbReference>
<dbReference type="FunFam" id="3.30.1520.10:FF:000008">
    <property type="entry name" value="Sorting nexin-17 isoform1"/>
    <property type="match status" value="1"/>
</dbReference>
<dbReference type="Gene3D" id="1.20.80.60">
    <property type="match status" value="1"/>
</dbReference>
<dbReference type="Gene3D" id="3.10.20.90">
    <property type="entry name" value="Phosphatidylinositol 3-kinase Catalytic Subunit, Chain A, domain 1"/>
    <property type="match status" value="1"/>
</dbReference>
<dbReference type="Gene3D" id="3.30.1520.10">
    <property type="entry name" value="Phox-like domain"/>
    <property type="match status" value="1"/>
</dbReference>
<dbReference type="Gene3D" id="2.30.29.30">
    <property type="entry name" value="Pleckstrin-homology domain (PH domain)/Phosphotyrosine-binding domain (PTB)"/>
    <property type="match status" value="1"/>
</dbReference>
<dbReference type="InterPro" id="IPR011993">
    <property type="entry name" value="PH-like_dom_sf"/>
</dbReference>
<dbReference type="InterPro" id="IPR001683">
    <property type="entry name" value="PX_dom"/>
</dbReference>
<dbReference type="InterPro" id="IPR036871">
    <property type="entry name" value="PX_dom_sf"/>
</dbReference>
<dbReference type="InterPro" id="IPR000159">
    <property type="entry name" value="RA_dom"/>
</dbReference>
<dbReference type="InterPro" id="IPR048763">
    <property type="entry name" value="SNX17-31_FERM_F1"/>
</dbReference>
<dbReference type="InterPro" id="IPR048767">
    <property type="entry name" value="SNX17-31_FERM_F2"/>
</dbReference>
<dbReference type="InterPro" id="IPR040842">
    <property type="entry name" value="SNX17/31_FERM"/>
</dbReference>
<dbReference type="InterPro" id="IPR037836">
    <property type="entry name" value="SNX17_FERM-like_dom"/>
</dbReference>
<dbReference type="InterPro" id="IPR028666">
    <property type="entry name" value="SNX17_FERM_N"/>
</dbReference>
<dbReference type="PANTHER" id="PTHR12431">
    <property type="entry name" value="SORTING NEXIN 17 AND 27"/>
    <property type="match status" value="1"/>
</dbReference>
<dbReference type="PANTHER" id="PTHR12431:SF16">
    <property type="entry name" value="SORTING NEXIN-17"/>
    <property type="match status" value="1"/>
</dbReference>
<dbReference type="Pfam" id="PF00787">
    <property type="entry name" value="PX"/>
    <property type="match status" value="1"/>
</dbReference>
<dbReference type="Pfam" id="PF21273">
    <property type="entry name" value="SNX17-27-31_F1_FERM"/>
    <property type="match status" value="1"/>
</dbReference>
<dbReference type="Pfam" id="PF21271">
    <property type="entry name" value="SNX17-31_F2_FERM"/>
    <property type="match status" value="1"/>
</dbReference>
<dbReference type="Pfam" id="PF18116">
    <property type="entry name" value="SNX17_FERM_C"/>
    <property type="match status" value="1"/>
</dbReference>
<dbReference type="SMART" id="SM00312">
    <property type="entry name" value="PX"/>
    <property type="match status" value="1"/>
</dbReference>
<dbReference type="SUPFAM" id="SSF64268">
    <property type="entry name" value="PX domain"/>
    <property type="match status" value="1"/>
</dbReference>
<dbReference type="PROSITE" id="PS50195">
    <property type="entry name" value="PX"/>
    <property type="match status" value="1"/>
</dbReference>
<dbReference type="PROSITE" id="PS50200">
    <property type="entry name" value="RA"/>
    <property type="match status" value="1"/>
</dbReference>
<proteinExistence type="evidence at transcript level"/>